<comment type="function">
    <text evidence="2">Ion channel inhibitor that inhibits the increase in intracellular calcium upon depolarization in DRG neurons. In vivo, both intraperitoneal and intracranial injections into mice induce hyperactivity.</text>
</comment>
<comment type="subcellular location">
    <subcellularLocation>
        <location evidence="6">Secreted</location>
    </subcellularLocation>
</comment>
<comment type="tissue specificity">
    <text evidence="6">Expressed by the venom duct.</text>
</comment>
<comment type="domain">
    <text evidence="5">The presence of a 'disulfide through disulfide knot' structurally defines this protein as a knottin.</text>
</comment>
<comment type="domain">
    <text evidence="5">The cysteine framework is VI/VII (C-C-CC-C-C).</text>
</comment>
<comment type="similarity">
    <text evidence="5">Belongs to the conotoxin O1 superfamily.</text>
</comment>
<sequence length="79" mass="8528">MKLTCVLIISVLFLTASQLITAVYSRDKQQYRAARLRDEMRNLKGARDCGEQGQGCYTRPCCPGLECLGGGTGGGVCQP</sequence>
<protein>
    <recommendedName>
        <fullName evidence="4">Conotoxin Kt6.1</fullName>
    </recommendedName>
</protein>
<proteinExistence type="inferred from homology"/>
<dbReference type="SMR" id="P0DW73"/>
<dbReference type="GO" id="GO:0005576">
    <property type="term" value="C:extracellular region"/>
    <property type="evidence" value="ECO:0007669"/>
    <property type="project" value="UniProtKB-SubCell"/>
</dbReference>
<dbReference type="GO" id="GO:0008200">
    <property type="term" value="F:ion channel inhibitor activity"/>
    <property type="evidence" value="ECO:0007669"/>
    <property type="project" value="InterPro"/>
</dbReference>
<dbReference type="GO" id="GO:0090729">
    <property type="term" value="F:toxin activity"/>
    <property type="evidence" value="ECO:0007669"/>
    <property type="project" value="UniProtKB-KW"/>
</dbReference>
<dbReference type="InterPro" id="IPR004214">
    <property type="entry name" value="Conotoxin"/>
</dbReference>
<dbReference type="Pfam" id="PF02950">
    <property type="entry name" value="Conotoxin"/>
    <property type="match status" value="1"/>
</dbReference>
<accession>P0DW73</accession>
<feature type="signal peptide" evidence="3">
    <location>
        <begin position="1"/>
        <end position="22"/>
    </location>
</feature>
<feature type="propeptide" id="PRO_0000456322" evidence="2">
    <location>
        <begin position="23"/>
        <end position="47"/>
    </location>
</feature>
<feature type="peptide" id="PRO_0000456323" description="Conotoxin Kt6.1" evidence="2">
    <location>
        <begin position="48"/>
        <end position="79"/>
    </location>
</feature>
<feature type="modified residue" description="4-hydroxyproline" evidence="2">
    <location>
        <position position="60"/>
    </location>
</feature>
<feature type="modified residue" description="4-hydroxyproline" evidence="2">
    <location>
        <position position="63"/>
    </location>
</feature>
<feature type="disulfide bond" evidence="1">
    <location>
        <begin position="49"/>
        <end position="62"/>
    </location>
</feature>
<feature type="disulfide bond" evidence="1">
    <location>
        <begin position="56"/>
        <end position="67"/>
    </location>
</feature>
<feature type="disulfide bond" evidence="1">
    <location>
        <begin position="61"/>
        <end position="77"/>
    </location>
</feature>
<organism>
    <name type="scientific">Conus kintoki</name>
    <name type="common">Cone snail</name>
    <name type="synonym">Virgiconus kintoki</name>
    <dbReference type="NCBI Taxonomy" id="568724"/>
    <lineage>
        <taxon>Eukaryota</taxon>
        <taxon>Metazoa</taxon>
        <taxon>Spiralia</taxon>
        <taxon>Lophotrochozoa</taxon>
        <taxon>Mollusca</taxon>
        <taxon>Gastropoda</taxon>
        <taxon>Caenogastropoda</taxon>
        <taxon>Neogastropoda</taxon>
        <taxon>Conoidea</taxon>
        <taxon>Conidae</taxon>
        <taxon>Conus</taxon>
        <taxon>Virgiconus</taxon>
    </lineage>
</organism>
<name>O161_CONKN</name>
<keyword id="KW-1015">Disulfide bond</keyword>
<keyword id="KW-0379">Hydroxylation</keyword>
<keyword id="KW-0872">Ion channel impairing toxin</keyword>
<keyword id="KW-0960">Knottin</keyword>
<keyword id="KW-0964">Secreted</keyword>
<keyword id="KW-0732">Signal</keyword>
<keyword id="KW-0800">Toxin</keyword>
<evidence type="ECO:0000250" key="1">
    <source>
        <dbReference type="UniProtKB" id="P60179"/>
    </source>
</evidence>
<evidence type="ECO:0000250" key="2">
    <source>
        <dbReference type="UniProtKB" id="Q5K0C7"/>
    </source>
</evidence>
<evidence type="ECO:0000255" key="3"/>
<evidence type="ECO:0000303" key="4">
    <source>
    </source>
</evidence>
<evidence type="ECO:0000305" key="5"/>
<evidence type="ECO:0000305" key="6">
    <source>
    </source>
</evidence>
<reference key="1">
    <citation type="journal article" date="2016" name="Toxicon">
        <title>Glycine-rich conotoxins from the Virgiconus clade.</title>
        <authorList>
            <person name="Espino S.S."/>
            <person name="Dilanyan T."/>
            <person name="Imperial J.S."/>
            <person name="Aguilar M.B."/>
            <person name="Teichert R.W."/>
            <person name="Bandyopadhyay P."/>
            <person name="Olivera B.M."/>
        </authorList>
    </citation>
    <scope>NUCLEOTIDE SEQUENCE [MRNA]</scope>
    <source>
        <tissue>Venom duct</tissue>
    </source>
</reference>